<feature type="chain" id="PRO_0000199717" description="Uptake hydrogenase large subunit">
    <location>
        <begin position="1"/>
        <end position="618"/>
    </location>
</feature>
<feature type="binding site" evidence="2">
    <location>
        <position position="75"/>
    </location>
    <ligand>
        <name>Ni(2+)</name>
        <dbReference type="ChEBI" id="CHEBI:49786"/>
    </ligand>
</feature>
<feature type="binding site" evidence="2">
    <location>
        <position position="78"/>
    </location>
    <ligand>
        <name>Ni(2+)</name>
        <dbReference type="ChEBI" id="CHEBI:49786"/>
    </ligand>
</feature>
<feature type="binding site" evidence="2">
    <location>
        <position position="597"/>
    </location>
    <ligand>
        <name>Ni(2+)</name>
        <dbReference type="ChEBI" id="CHEBI:49786"/>
    </ligand>
</feature>
<feature type="binding site" evidence="2">
    <location>
        <position position="600"/>
    </location>
    <ligand>
        <name>Ni(2+)</name>
        <dbReference type="ChEBI" id="CHEBI:49786"/>
    </ligand>
</feature>
<reference key="1">
    <citation type="journal article" date="1990" name="Mol. Gen. Genet.">
        <title>Cloning and sequencing the genes encoding uptake-hydrogenase subunits of Rhodocyclus gelatinosus.</title>
        <authorList>
            <person name="Uffen R.L."/>
            <person name="Colbeau A."/>
            <person name="Richaud P."/>
            <person name="Vignais P.M."/>
        </authorList>
    </citation>
    <scope>NUCLEOTIDE SEQUENCE [GENOMIC DNA]</scope>
</reference>
<keyword id="KW-1003">Cell membrane</keyword>
<keyword id="KW-0472">Membrane</keyword>
<keyword id="KW-0479">Metal-binding</keyword>
<keyword id="KW-0533">Nickel</keyword>
<keyword id="KW-0560">Oxidoreductase</keyword>
<gene>
    <name type="primary">hupB</name>
    <name type="synonym">hupL</name>
</gene>
<accession>P17632</accession>
<protein>
    <recommendedName>
        <fullName>Uptake hydrogenase large subunit</fullName>
        <ecNumber>1.12.99.6</ecNumber>
    </recommendedName>
    <alternativeName>
        <fullName>Hydrogenlyase</fullName>
    </alternativeName>
    <alternativeName>
        <fullName>Membrane-bound hydrogenase large subunit</fullName>
    </alternativeName>
</protein>
<evidence type="ECO:0000250" key="1"/>
<evidence type="ECO:0000255" key="2"/>
<evidence type="ECO:0000305" key="3"/>
<organism>
    <name type="scientific">Rubrivivax gelatinosus</name>
    <name type="common">Rhodocyclus gelatinosus</name>
    <name type="synonym">Rhodopseudomonas gelatinosa</name>
    <dbReference type="NCBI Taxonomy" id="28068"/>
    <lineage>
        <taxon>Bacteria</taxon>
        <taxon>Pseudomonadati</taxon>
        <taxon>Pseudomonadota</taxon>
        <taxon>Betaproteobacteria</taxon>
        <taxon>Burkholderiales</taxon>
        <taxon>Sphaerotilaceae</taxon>
        <taxon>Rubrivivax</taxon>
    </lineage>
</organism>
<sequence length="618" mass="68527">MGAIETQGFKLDDSGRRIVVDPVTRIEGHMRCEVNVDANNVIRNAVSTGTMWRGLEVILKGRDPRDAWAFVERICGVCTGCHALTSVRAVEDALGIRIPKNAHLIREMMAKTLQVHDHAVHFYHLHALDWVDVVSALKADPKKTSELQHLVSPSHPLSSPGYFPRRGRTGLKKFVESGQLGPFMNGYWGSKAYVLPPEANLMAVTHYLEALDLQKEWVKVHAIFGGKNPHPNYLVGGVPCAINLDGNGAAGRINMERLNFVKARIDEMIEFNKNVYLPDVLAIGTIYKQAGWLHGGGLSALNVADYGTYDKVAYDHATHQLPGGVILDGNWDEIHAIDPRDPEQVQEFVAHSWYQYADESKGLHPWDGVTEPKFELGARTKGTRTAIEHIDESAKYSWIKSPRWRGHAVEVGPLSRYILGYAHALKGNKYCQRVKEQVDFAAEAINHAIPKALGLPETQYTLKQLLPTTIGRTLARCLEGQYCGEMMLADYHELVANIRAGDTATANVEKWDPATWPKEAKGVGTVAAPRGMLGHWIRIKDGKIENYQCVVPTTWNGSPRDAKGQIGAFEASLLGTPMVNPEQPVEILRTLHSFDPCLACSTHVMSEDGRELTTVKVR</sequence>
<dbReference type="EC" id="1.12.99.6"/>
<dbReference type="EMBL" id="X52522">
    <property type="protein sequence ID" value="CAA36755.1"/>
    <property type="molecule type" value="Genomic_DNA"/>
</dbReference>
<dbReference type="PIR" id="S09251">
    <property type="entry name" value="S09251"/>
</dbReference>
<dbReference type="SMR" id="P17632"/>
<dbReference type="GO" id="GO:0005886">
    <property type="term" value="C:plasma membrane"/>
    <property type="evidence" value="ECO:0007669"/>
    <property type="project" value="UniProtKB-SubCell"/>
</dbReference>
<dbReference type="GO" id="GO:0008901">
    <property type="term" value="F:ferredoxin hydrogenase activity"/>
    <property type="evidence" value="ECO:0007669"/>
    <property type="project" value="InterPro"/>
</dbReference>
<dbReference type="GO" id="GO:0033748">
    <property type="term" value="F:hydrogenase (acceptor) activity"/>
    <property type="evidence" value="ECO:0007669"/>
    <property type="project" value="UniProtKB-EC"/>
</dbReference>
<dbReference type="GO" id="GO:0016151">
    <property type="term" value="F:nickel cation binding"/>
    <property type="evidence" value="ECO:0007669"/>
    <property type="project" value="InterPro"/>
</dbReference>
<dbReference type="FunFam" id="1.10.645.10:FF:000002">
    <property type="entry name" value="Hydrogenase 2 large subunit"/>
    <property type="match status" value="1"/>
</dbReference>
<dbReference type="Gene3D" id="1.10.645.10">
    <property type="entry name" value="Cytochrome-c3 Hydrogenase, chain B"/>
    <property type="match status" value="1"/>
</dbReference>
<dbReference type="InterPro" id="IPR001501">
    <property type="entry name" value="Ni-dep_hyd_lsu"/>
</dbReference>
<dbReference type="InterPro" id="IPR018194">
    <property type="entry name" value="Ni-dep_hyd_lsu_Ni_BS"/>
</dbReference>
<dbReference type="InterPro" id="IPR029014">
    <property type="entry name" value="NiFe-Hase_large"/>
</dbReference>
<dbReference type="InterPro" id="IPR050867">
    <property type="entry name" value="NiFe/NiFeSe_hydrgnase_LSU"/>
</dbReference>
<dbReference type="PANTHER" id="PTHR42958">
    <property type="entry name" value="HYDROGENASE-2 LARGE CHAIN"/>
    <property type="match status" value="1"/>
</dbReference>
<dbReference type="PANTHER" id="PTHR42958:SF2">
    <property type="entry name" value="UPTAKE HYDROGENASE LARGE SUBUNIT"/>
    <property type="match status" value="1"/>
</dbReference>
<dbReference type="Pfam" id="PF00374">
    <property type="entry name" value="NiFeSe_Hases"/>
    <property type="match status" value="1"/>
</dbReference>
<dbReference type="SUPFAM" id="SSF56762">
    <property type="entry name" value="HydB/Nqo4-like"/>
    <property type="match status" value="1"/>
</dbReference>
<dbReference type="PROSITE" id="PS00507">
    <property type="entry name" value="NI_HGENASE_L_1"/>
    <property type="match status" value="1"/>
</dbReference>
<dbReference type="PROSITE" id="PS00508">
    <property type="entry name" value="NI_HGENASE_L_2"/>
    <property type="match status" value="1"/>
</dbReference>
<name>MBHL_RUBGE</name>
<proteinExistence type="inferred from homology"/>
<comment type="function">
    <text>This enzyme recycles the H(2) produced by nitrogenase to increase the production of ATP and to protect nitrogenase against inhibition or damage by O(2) under carbon- or phosphate-limited conditions.</text>
</comment>
<comment type="catalytic activity">
    <reaction>
        <text>H2 + A = AH2</text>
        <dbReference type="Rhea" id="RHEA:12116"/>
        <dbReference type="ChEBI" id="CHEBI:13193"/>
        <dbReference type="ChEBI" id="CHEBI:17499"/>
        <dbReference type="ChEBI" id="CHEBI:18276"/>
        <dbReference type="EC" id="1.12.99.6"/>
    </reaction>
</comment>
<comment type="cofactor">
    <cofactor evidence="1">
        <name>Ni(2+)</name>
        <dbReference type="ChEBI" id="CHEBI:49786"/>
    </cofactor>
    <text evidence="1">Binds 1 nickel ion per subunit.</text>
</comment>
<comment type="subunit">
    <text>Heterodimer of a large and a small subunit.</text>
</comment>
<comment type="subcellular location">
    <subcellularLocation>
        <location>Cell membrane</location>
        <topology>Peripheral membrane protein</topology>
    </subcellularLocation>
</comment>
<comment type="similarity">
    <text evidence="3">Belongs to the [NiFe]/[NiFeSe] hydrogenase large subunit family.</text>
</comment>